<accession>Q9JL55</accession>
<accession>Q6IRJ6</accession>
<reference key="1">
    <citation type="journal article" date="2000" name="Proc. Natl. Acad. Sci. U.S.A.">
        <title>MIR16, a putative membrane glycerophosphodiester phosphodiesterase, interacts with RGS16.</title>
        <authorList>
            <person name="Zheng B."/>
            <person name="Chen D."/>
            <person name="Farquhar M.G."/>
        </authorList>
    </citation>
    <scope>NUCLEOTIDE SEQUENCE [MRNA]</scope>
    <scope>INTERACTION WITH RGS16</scope>
    <scope>SUBCELLULAR LOCATION</scope>
    <scope>GLYCOSYLATION</scope>
    <scope>TISSUE SPECIFICITY</scope>
</reference>
<reference key="2">
    <citation type="journal article" date="2004" name="Genome Res.">
        <title>The status, quality, and expansion of the NIH full-length cDNA project: the Mammalian Gene Collection (MGC).</title>
        <authorList>
            <consortium name="The MGC Project Team"/>
        </authorList>
    </citation>
    <scope>NUCLEOTIDE SEQUENCE [LARGE SCALE MRNA]</scope>
    <source>
        <tissue>Lung</tissue>
    </source>
</reference>
<reference key="3">
    <citation type="journal article" date="2003" name="Proc. Natl. Acad. Sci. U.S.A.">
        <title>GDE1/MIR16 is a glycerophosphoinositol phosphodiesterase regulated by stimulation of G protein-coupled receptors.</title>
        <authorList>
            <person name="Zheng B."/>
            <person name="Berrie C.P."/>
            <person name="Corda D."/>
            <person name="Farquhar M.G."/>
        </authorList>
    </citation>
    <scope>FUNCTION</scope>
    <scope>SUBCELLULAR LOCATION</scope>
    <scope>BIOPHYSICOCHEMICAL PROPERTIES</scope>
    <scope>MEMBRANE TOPOLOGY</scope>
    <scope>MUTAGENESIS OF GLU-97; ASP-99 AND HIS-112</scope>
    <scope>COFACTOR</scope>
</reference>
<comment type="function">
    <text evidence="1 5">Hydrolyzes the phosphodiester bond of glycerophosphodiesters such as glycerophosphoinositol (GroPIns) and glycerophosphoethanolamine (GroPEth), to yield a glycerol phosphate and an alcohol (PubMed:12576545). Hydrolyzes glycerophospho-N-acylethanolamines to N-acylethanolamines in the brain and participates in bioactive N-acylethanolamine biosynthesis such as anandamide (an endocannabinoid), N-palmitoylethanolamine (an anti-inflammatory), and N-oleoylethanolamine (an anorexic). In addition, has a lysophospholipase D activity by hydrolyzing N-acyl-lysoplasmenylethanolamine (N-acyl-lysoPlsEt) to N-acylethanolamine. However lysophospholipase D activity is lower than glycerophosphodiester phosphodiesterase activity (By similarity). Has little or no activity towards glycerophosphocholine (PubMed:12576545).</text>
</comment>
<comment type="catalytic activity">
    <reaction evidence="5">
        <text>sn-glycero-3-phospho-1D-myo-inositol + H2O = myo-inositol + sn-glycerol 3-phosphate + H(+)</text>
        <dbReference type="Rhea" id="RHEA:16501"/>
        <dbReference type="ChEBI" id="CHEBI:15377"/>
        <dbReference type="ChEBI" id="CHEBI:15378"/>
        <dbReference type="ChEBI" id="CHEBI:17268"/>
        <dbReference type="ChEBI" id="CHEBI:57597"/>
        <dbReference type="ChEBI" id="CHEBI:58444"/>
        <dbReference type="EC" id="3.1.4.44"/>
    </reaction>
    <physiologicalReaction direction="left-to-right" evidence="8">
        <dbReference type="Rhea" id="RHEA:16502"/>
    </physiologicalReaction>
</comment>
<comment type="catalytic activity">
    <reaction evidence="1">
        <text>1-O-(1Z-octadecenyl)-sn-glycero-3-phospho-(N-5Z,8Z,11Z,14Z-eicosatetraenoyl)-ethanolamine + H2O = 1-O-(1Z-octadecenyl)-sn-glycero-3-phosphate + N-(5Z,8Z,11Z,14Z-eicosatetraenoyl)-ethanolamine + H(+)</text>
        <dbReference type="Rhea" id="RHEA:53192"/>
        <dbReference type="ChEBI" id="CHEBI:2700"/>
        <dbReference type="ChEBI" id="CHEBI:15377"/>
        <dbReference type="ChEBI" id="CHEBI:15378"/>
        <dbReference type="ChEBI" id="CHEBI:137016"/>
        <dbReference type="ChEBI" id="CHEBI:137017"/>
    </reaction>
    <physiologicalReaction direction="left-to-right" evidence="1">
        <dbReference type="Rhea" id="RHEA:53193"/>
    </physiologicalReaction>
</comment>
<comment type="catalytic activity">
    <reaction evidence="1">
        <text>1-O-(1Z-octadecenyl)-sn-glycero-3-phospho-(N-9Z-octadecenoyl)-ethanolamine + H2O = 1-O-(1Z-octadecenyl)-sn-glycero-3-phosphate + N-(9Z-octadecenoyl) ethanolamine + H(+)</text>
        <dbReference type="Rhea" id="RHEA:53188"/>
        <dbReference type="ChEBI" id="CHEBI:15377"/>
        <dbReference type="ChEBI" id="CHEBI:15378"/>
        <dbReference type="ChEBI" id="CHEBI:71466"/>
        <dbReference type="ChEBI" id="CHEBI:137010"/>
        <dbReference type="ChEBI" id="CHEBI:137017"/>
    </reaction>
    <physiologicalReaction direction="left-to-right" evidence="1">
        <dbReference type="Rhea" id="RHEA:53189"/>
    </physiologicalReaction>
</comment>
<comment type="catalytic activity">
    <reaction evidence="1">
        <text>1-O-(1Z-octadecenyl)-sn-glycero-3-phospho-N-hexadecanoyl-ethanolamine + H2O = 1-O-(1Z-octadecenyl)-sn-glycero-3-phosphate + N-hexadecanoylethanolamine + H(+)</text>
        <dbReference type="Rhea" id="RHEA:53184"/>
        <dbReference type="ChEBI" id="CHEBI:15377"/>
        <dbReference type="ChEBI" id="CHEBI:15378"/>
        <dbReference type="ChEBI" id="CHEBI:71464"/>
        <dbReference type="ChEBI" id="CHEBI:137009"/>
        <dbReference type="ChEBI" id="CHEBI:137017"/>
    </reaction>
    <physiologicalReaction direction="left-to-right" evidence="1">
        <dbReference type="Rhea" id="RHEA:53185"/>
    </physiologicalReaction>
</comment>
<comment type="catalytic activity">
    <reaction evidence="1">
        <text>N-(4Z,7Z,10Z,13Z,16Z,19Z)-docosahexaenoyl-sn-glycero-3-phosphoethanolamine + H2O = N-(4Z,7Z,10Z,13Z,16Z,19Z)-docosahexaenoyl ethanolamine + sn-glycerol 3-phosphate + H(+)</text>
        <dbReference type="Rhea" id="RHEA:45444"/>
        <dbReference type="ChEBI" id="CHEBI:15377"/>
        <dbReference type="ChEBI" id="CHEBI:15378"/>
        <dbReference type="ChEBI" id="CHEBI:57597"/>
        <dbReference type="ChEBI" id="CHEBI:85250"/>
        <dbReference type="ChEBI" id="CHEBI:85252"/>
    </reaction>
    <physiologicalReaction direction="left-to-right" evidence="1">
        <dbReference type="Rhea" id="RHEA:45445"/>
    </physiologicalReaction>
</comment>
<comment type="catalytic activity">
    <reaction evidence="1">
        <text>N-eicosanoyl-sn-glycero-3-phosphoethanolamine + H2O = N-eicosanoyl ethanolamine + sn-glycerol 3-phosphate + H(+)</text>
        <dbReference type="Rhea" id="RHEA:45440"/>
        <dbReference type="ChEBI" id="CHEBI:15377"/>
        <dbReference type="ChEBI" id="CHEBI:15378"/>
        <dbReference type="ChEBI" id="CHEBI:57597"/>
        <dbReference type="ChEBI" id="CHEBI:85228"/>
        <dbReference type="ChEBI" id="CHEBI:85253"/>
    </reaction>
    <physiologicalReaction direction="left-to-right" evidence="1">
        <dbReference type="Rhea" id="RHEA:45441"/>
    </physiologicalReaction>
</comment>
<comment type="catalytic activity">
    <reaction evidence="1">
        <text>N-hexadecanoyl-sn-glycero-3-phosphoethanolamine + H2O = N-hexadecanoylethanolamine + sn-glycerol 3-phosphate + H(+)</text>
        <dbReference type="Rhea" id="RHEA:45436"/>
        <dbReference type="ChEBI" id="CHEBI:15377"/>
        <dbReference type="ChEBI" id="CHEBI:15378"/>
        <dbReference type="ChEBI" id="CHEBI:57597"/>
        <dbReference type="ChEBI" id="CHEBI:71464"/>
        <dbReference type="ChEBI" id="CHEBI:85226"/>
    </reaction>
    <physiologicalReaction direction="left-to-right" evidence="1">
        <dbReference type="Rhea" id="RHEA:45437"/>
    </physiologicalReaction>
</comment>
<comment type="catalytic activity">
    <reaction evidence="1">
        <text>N-(9Z-octadecenoyl)-sn-glycero-3-phosphoethanolamine + H2O = N-(9Z-octadecenoyl) ethanolamine + sn-glycerol 3-phosphate + H(+)</text>
        <dbReference type="Rhea" id="RHEA:45432"/>
        <dbReference type="ChEBI" id="CHEBI:15377"/>
        <dbReference type="ChEBI" id="CHEBI:15378"/>
        <dbReference type="ChEBI" id="CHEBI:57597"/>
        <dbReference type="ChEBI" id="CHEBI:71466"/>
        <dbReference type="ChEBI" id="CHEBI:85229"/>
    </reaction>
    <physiologicalReaction direction="left-to-right" evidence="1">
        <dbReference type="Rhea" id="RHEA:45433"/>
    </physiologicalReaction>
</comment>
<comment type="catalytic activity">
    <reaction evidence="1">
        <text>N-(5Z,8Z,11Z,14Z-eicosatetraenoyl)-sn-glycero-3-phosphoethanolamine + H2O = N-(5Z,8Z,11Z,14Z-eicosatetraenoyl)-ethanolamine + sn-glycerol 3-phosphate + H(+)</text>
        <dbReference type="Rhea" id="RHEA:45428"/>
        <dbReference type="ChEBI" id="CHEBI:2700"/>
        <dbReference type="ChEBI" id="CHEBI:15377"/>
        <dbReference type="ChEBI" id="CHEBI:15378"/>
        <dbReference type="ChEBI" id="CHEBI:57597"/>
        <dbReference type="ChEBI" id="CHEBI:85230"/>
    </reaction>
    <physiologicalReaction direction="left-to-right" evidence="1">
        <dbReference type="Rhea" id="RHEA:45429"/>
    </physiologicalReaction>
</comment>
<comment type="cofactor">
    <cofactor evidence="5">
        <name>Mg(2+)</name>
        <dbReference type="ChEBI" id="CHEBI:18420"/>
    </cofactor>
</comment>
<comment type="activity regulation">
    <text evidence="1 5">Inhibited by EDTA, calcium chloride, and zinc chloride. Enhanced by magnesium chloride (By similarity). Glycerophosphodiester phosphodiesterase activity can be modulated by G-protein signaling pathways (PubMed:12576545).</text>
</comment>
<comment type="biophysicochemical properties">
    <kinetics>
        <KM evidence="5">12 mM for glycerophosphoinositol</KM>
        <Vmax evidence="5">3000.0 pmol/min/mg enzyme</Vmax>
        <text>Measured in the presence of 10 mM magnesium chloride at 37 degrees Celsius.</text>
    </kinetics>
</comment>
<comment type="subunit">
    <text evidence="2 4">Interacts with PRAF2 (By similarity). Interacts with RGS16 (PubMed:10760272).</text>
</comment>
<comment type="subcellular location">
    <subcellularLocation>
        <location evidence="4 5">Cell membrane</location>
        <topology evidence="3">Multi-pass membrane protein</topology>
    </subcellularLocation>
    <subcellularLocation>
        <location evidence="4 5">Cytoplasmic vesicle membrane</location>
        <topology evidence="3">Multi-pass membrane protein</topology>
    </subcellularLocation>
    <text evidence="8">Perinuclear vesicles and cell membrane.</text>
</comment>
<comment type="tissue specificity">
    <text evidence="4">Detected in heart, brain, lung, liver, skeletal muscle, kidney, pituitary and testis.</text>
</comment>
<comment type="PTM">
    <text evidence="4">N-glycosylated.</text>
</comment>
<comment type="similarity">
    <text evidence="7">Belongs to the glycerophosphoryl diester phosphodiesterase family.</text>
</comment>
<proteinExistence type="evidence at protein level"/>
<evidence type="ECO:0000250" key="1">
    <source>
        <dbReference type="UniProtKB" id="Q9JL56"/>
    </source>
</evidence>
<evidence type="ECO:0000250" key="2">
    <source>
        <dbReference type="UniProtKB" id="Q9NZC3"/>
    </source>
</evidence>
<evidence type="ECO:0000255" key="3"/>
<evidence type="ECO:0000269" key="4">
    <source>
    </source>
</evidence>
<evidence type="ECO:0000269" key="5">
    <source>
    </source>
</evidence>
<evidence type="ECO:0000303" key="6">
    <source>
    </source>
</evidence>
<evidence type="ECO:0000305" key="7"/>
<evidence type="ECO:0000305" key="8">
    <source>
    </source>
</evidence>
<evidence type="ECO:0000312" key="9">
    <source>
        <dbReference type="RGD" id="621788"/>
    </source>
</evidence>
<dbReference type="EC" id="3.1.4.44" evidence="5"/>
<dbReference type="EC" id="3.1.4.-" evidence="1"/>
<dbReference type="EMBL" id="AF212861">
    <property type="protein sequence ID" value="AAF65233.1"/>
    <property type="molecule type" value="mRNA"/>
</dbReference>
<dbReference type="EMBL" id="BC070897">
    <property type="protein sequence ID" value="AAH70897.1"/>
    <property type="molecule type" value="mRNA"/>
</dbReference>
<dbReference type="RefSeq" id="NP_116004.2">
    <property type="nucleotide sequence ID" value="NM_032615.2"/>
</dbReference>
<dbReference type="SMR" id="Q9JL55"/>
<dbReference type="FunCoup" id="Q9JL55">
    <property type="interactions" value="778"/>
</dbReference>
<dbReference type="STRING" id="10116.ENSRNOP00000064735"/>
<dbReference type="GlyCosmos" id="Q9JL55">
    <property type="glycosylation" value="1 site, No reported glycans"/>
</dbReference>
<dbReference type="GlyGen" id="Q9JL55">
    <property type="glycosylation" value="1 site"/>
</dbReference>
<dbReference type="PhosphoSitePlus" id="Q9JL55"/>
<dbReference type="jPOST" id="Q9JL55"/>
<dbReference type="PaxDb" id="10116-ENSRNOP00000064735"/>
<dbReference type="GeneID" id="60418"/>
<dbReference type="KEGG" id="rno:60418"/>
<dbReference type="AGR" id="RGD:621788"/>
<dbReference type="CTD" id="51573"/>
<dbReference type="RGD" id="621788">
    <property type="gene designation" value="Gde1"/>
</dbReference>
<dbReference type="eggNOG" id="KOG2258">
    <property type="taxonomic scope" value="Eukaryota"/>
</dbReference>
<dbReference type="InParanoid" id="Q9JL55"/>
<dbReference type="OrthoDB" id="197419at2759"/>
<dbReference type="PhylomeDB" id="Q9JL55"/>
<dbReference type="Reactome" id="R-RNO-6814848">
    <property type="pathway name" value="Glycerophospholipid catabolism"/>
</dbReference>
<dbReference type="SABIO-RK" id="Q9JL55"/>
<dbReference type="PRO" id="PR:Q9JL55"/>
<dbReference type="Proteomes" id="UP000002494">
    <property type="component" value="Unplaced"/>
</dbReference>
<dbReference type="GO" id="GO:0030659">
    <property type="term" value="C:cytoplasmic vesicle membrane"/>
    <property type="evidence" value="ECO:0007669"/>
    <property type="project" value="UniProtKB-SubCell"/>
</dbReference>
<dbReference type="GO" id="GO:0016020">
    <property type="term" value="C:membrane"/>
    <property type="evidence" value="ECO:0000266"/>
    <property type="project" value="RGD"/>
</dbReference>
<dbReference type="GO" id="GO:0005886">
    <property type="term" value="C:plasma membrane"/>
    <property type="evidence" value="ECO:0000250"/>
    <property type="project" value="UniProtKB"/>
</dbReference>
<dbReference type="GO" id="GO:0008889">
    <property type="term" value="F:glycerophosphodiester phosphodiesterase activity"/>
    <property type="evidence" value="ECO:0000250"/>
    <property type="project" value="UniProtKB"/>
</dbReference>
<dbReference type="GO" id="GO:0047395">
    <property type="term" value="F:glycerophosphoinositol glycerophosphodiesterase activity"/>
    <property type="evidence" value="ECO:0000250"/>
    <property type="project" value="UniProtKB"/>
</dbReference>
<dbReference type="GO" id="GO:0004622">
    <property type="term" value="F:lysophospholipase activity"/>
    <property type="evidence" value="ECO:0000250"/>
    <property type="project" value="UniProtKB"/>
</dbReference>
<dbReference type="GO" id="GO:0046872">
    <property type="term" value="F:metal ion binding"/>
    <property type="evidence" value="ECO:0007669"/>
    <property type="project" value="UniProtKB-KW"/>
</dbReference>
<dbReference type="GO" id="GO:0008081">
    <property type="term" value="F:phosphoric diester hydrolase activity"/>
    <property type="evidence" value="ECO:0000266"/>
    <property type="project" value="RGD"/>
</dbReference>
<dbReference type="GO" id="GO:0006580">
    <property type="term" value="P:ethanolamine metabolic process"/>
    <property type="evidence" value="ECO:0000250"/>
    <property type="project" value="UniProtKB"/>
</dbReference>
<dbReference type="GO" id="GO:0007186">
    <property type="term" value="P:G protein-coupled receptor signaling pathway"/>
    <property type="evidence" value="ECO:0000303"/>
    <property type="project" value="RGD"/>
</dbReference>
<dbReference type="GO" id="GO:0070291">
    <property type="term" value="P:N-acylethanolamine metabolic process"/>
    <property type="evidence" value="ECO:0000250"/>
    <property type="project" value="UniProtKB"/>
</dbReference>
<dbReference type="GO" id="GO:0006644">
    <property type="term" value="P:phospholipid metabolic process"/>
    <property type="evidence" value="ECO:0000250"/>
    <property type="project" value="UniProtKB"/>
</dbReference>
<dbReference type="CDD" id="cd08573">
    <property type="entry name" value="GDPD_GDE1"/>
    <property type="match status" value="1"/>
</dbReference>
<dbReference type="FunFam" id="3.20.20.190:FF:000029">
    <property type="entry name" value="Glycerophosphodiester phosphodiesterase 1 isoform X1"/>
    <property type="match status" value="1"/>
</dbReference>
<dbReference type="Gene3D" id="3.20.20.190">
    <property type="entry name" value="Phosphatidylinositol (PI) phosphodiesterase"/>
    <property type="match status" value="1"/>
</dbReference>
<dbReference type="InterPro" id="IPR030395">
    <property type="entry name" value="GP_PDE_dom"/>
</dbReference>
<dbReference type="InterPro" id="IPR017946">
    <property type="entry name" value="PLC-like_Pdiesterase_TIM-brl"/>
</dbReference>
<dbReference type="PANTHER" id="PTHR46320">
    <property type="entry name" value="GLYCEROPHOSPHODIESTER PHOSPHODIESTERASE 1"/>
    <property type="match status" value="1"/>
</dbReference>
<dbReference type="PANTHER" id="PTHR46320:SF1">
    <property type="entry name" value="GLYCEROPHOSPHODIESTER PHOSPHODIESTERASE 1"/>
    <property type="match status" value="1"/>
</dbReference>
<dbReference type="Pfam" id="PF03009">
    <property type="entry name" value="GDPD"/>
    <property type="match status" value="1"/>
</dbReference>
<dbReference type="SUPFAM" id="SSF51695">
    <property type="entry name" value="PLC-like phosphodiesterases"/>
    <property type="match status" value="1"/>
</dbReference>
<dbReference type="PROSITE" id="PS51704">
    <property type="entry name" value="GP_PDE"/>
    <property type="match status" value="1"/>
</dbReference>
<feature type="chain" id="PRO_0000251946" description="Glycerophosphodiester phosphodiesterase 1">
    <location>
        <begin position="1"/>
        <end position="331"/>
    </location>
</feature>
<feature type="topological domain" description="Cytoplasmic" evidence="3">
    <location>
        <begin position="1"/>
        <end position="3"/>
    </location>
</feature>
<feature type="transmembrane region" description="Helical" evidence="3">
    <location>
        <begin position="4"/>
        <end position="24"/>
    </location>
</feature>
<feature type="topological domain" description="Lumenal" evidence="3">
    <location>
        <begin position="25"/>
        <end position="248"/>
    </location>
</feature>
<feature type="transmembrane region" description="Helical" evidence="3">
    <location>
        <begin position="249"/>
        <end position="269"/>
    </location>
</feature>
<feature type="topological domain" description="Cytoplasmic" evidence="3">
    <location>
        <begin position="270"/>
        <end position="331"/>
    </location>
</feature>
<feature type="domain" description="GP-PDE">
    <location>
        <begin position="65"/>
        <end position="331"/>
    </location>
</feature>
<feature type="binding site" evidence="3">
    <location>
        <position position="97"/>
    </location>
    <ligand>
        <name>Mg(2+)</name>
        <dbReference type="ChEBI" id="CHEBI:18420"/>
    </ligand>
</feature>
<feature type="binding site" evidence="3">
    <location>
        <position position="99"/>
    </location>
    <ligand>
        <name>Mg(2+)</name>
        <dbReference type="ChEBI" id="CHEBI:18420"/>
    </ligand>
</feature>
<feature type="binding site" evidence="3">
    <location>
        <position position="174"/>
    </location>
    <ligand>
        <name>Mg(2+)</name>
        <dbReference type="ChEBI" id="CHEBI:18420"/>
    </ligand>
</feature>
<feature type="glycosylation site" description="N-linked (GlcNAc...) asparagine" evidence="3">
    <location>
        <position position="168"/>
    </location>
</feature>
<feature type="mutagenesis site" description="Strongly reduced activity; when associated with A-99." evidence="5">
    <original>E</original>
    <variation>A</variation>
    <location>
        <position position="97"/>
    </location>
</feature>
<feature type="mutagenesis site" description="Strongly reduced activity; when associated with A-97." evidence="5">
    <original>D</original>
    <variation>A</variation>
    <location>
        <position position="99"/>
    </location>
</feature>
<feature type="mutagenesis site" description="Loss of activity." evidence="5">
    <original>H</original>
    <variation>A</variation>
    <location>
        <position position="112"/>
    </location>
</feature>
<feature type="sequence conflict" description="In Ref. 1; AAF65233." evidence="7" ref="1">
    <original>D</original>
    <variation>N</variation>
    <location>
        <position position="326"/>
    </location>
</feature>
<sequence>MWLWEDQGGLLGPFSFVLVLLLVVTRSPFNACVLTGSLYLLLRFFSFEPVPSRRALQVLKPRDRVSAIAHRGGSHDAPENTLAAIRQAAKNGATGVELDIEFTSDGVPVLMHDNTVDRTTDGSGRLCDLTFEQVRKLNPAANHRLRNEFPDERIPTLREAVTECLCHNLTIFFDVKGHADMASAALKNIYMEFPQLYNNSMVCSFLPEVIYKMRQTDQKVITALTHRPWSLSHTGDGKPRYSVFWKQSVFVVLDILLDWSMHNVLWYLCGISAFLMQKDFVSPDYLKKWSAKGIQVVSWTVNTFDEKNYYESHLGSSYITDSMLEDCAPHF</sequence>
<organism>
    <name type="scientific">Rattus norvegicus</name>
    <name type="common">Rat</name>
    <dbReference type="NCBI Taxonomy" id="10116"/>
    <lineage>
        <taxon>Eukaryota</taxon>
        <taxon>Metazoa</taxon>
        <taxon>Chordata</taxon>
        <taxon>Craniata</taxon>
        <taxon>Vertebrata</taxon>
        <taxon>Euteleostomi</taxon>
        <taxon>Mammalia</taxon>
        <taxon>Eutheria</taxon>
        <taxon>Euarchontoglires</taxon>
        <taxon>Glires</taxon>
        <taxon>Rodentia</taxon>
        <taxon>Myomorpha</taxon>
        <taxon>Muroidea</taxon>
        <taxon>Muridae</taxon>
        <taxon>Murinae</taxon>
        <taxon>Rattus</taxon>
    </lineage>
</organism>
<gene>
    <name evidence="9" type="primary">Gde1</name>
    <name evidence="6" type="synonym">Mir16</name>
</gene>
<keyword id="KW-1003">Cell membrane</keyword>
<keyword id="KW-0968">Cytoplasmic vesicle</keyword>
<keyword id="KW-0325">Glycoprotein</keyword>
<keyword id="KW-0378">Hydrolase</keyword>
<keyword id="KW-0443">Lipid metabolism</keyword>
<keyword id="KW-0460">Magnesium</keyword>
<keyword id="KW-0472">Membrane</keyword>
<keyword id="KW-0479">Metal-binding</keyword>
<keyword id="KW-1185">Reference proteome</keyword>
<keyword id="KW-0812">Transmembrane</keyword>
<keyword id="KW-1133">Transmembrane helix</keyword>
<protein>
    <recommendedName>
        <fullName evidence="7">Glycerophosphodiester phosphodiesterase 1</fullName>
    </recommendedName>
    <alternativeName>
        <fullName evidence="7">Glycerophosphoinositol glycerophosphodiesterase GDE1</fullName>
        <ecNumber evidence="5">3.1.4.44</ecNumber>
    </alternativeName>
    <alternativeName>
        <fullName evidence="7">Lysophospholipase D GDE1</fullName>
        <ecNumber evidence="1">3.1.4.-</ecNumber>
    </alternativeName>
    <alternativeName>
        <fullName evidence="6">Membrane-interacting protein of RGS16</fullName>
    </alternativeName>
</protein>
<name>GDE1_RAT</name>